<evidence type="ECO:0000250" key="1">
    <source>
        <dbReference type="UniProtKB" id="Q96EN8"/>
    </source>
</evidence>
<evidence type="ECO:0000255" key="2">
    <source>
        <dbReference type="HAMAP-Rule" id="MF_03050"/>
    </source>
</evidence>
<evidence type="ECO:0000269" key="3">
    <source>
    </source>
</evidence>
<proteinExistence type="evidence at transcript level"/>
<organism>
    <name type="scientific">Solanum lycopersicum</name>
    <name type="common">Tomato</name>
    <name type="synonym">Lycopersicon esculentum</name>
    <dbReference type="NCBI Taxonomy" id="4081"/>
    <lineage>
        <taxon>Eukaryota</taxon>
        <taxon>Viridiplantae</taxon>
        <taxon>Streptophyta</taxon>
        <taxon>Embryophyta</taxon>
        <taxon>Tracheophyta</taxon>
        <taxon>Spermatophyta</taxon>
        <taxon>Magnoliopsida</taxon>
        <taxon>eudicotyledons</taxon>
        <taxon>Gunneridae</taxon>
        <taxon>Pentapetalae</taxon>
        <taxon>asterids</taxon>
        <taxon>lamiids</taxon>
        <taxon>Solanales</taxon>
        <taxon>Solanaceae</taxon>
        <taxon>Solanoideae</taxon>
        <taxon>Solaneae</taxon>
        <taxon>Solanum</taxon>
        <taxon>Solanum subgen. Lycopersicon</taxon>
    </lineage>
</organism>
<reference key="1">
    <citation type="journal article" date="2002" name="Plant J.">
        <title>The absence of molybdenum cofactor sulfuration is the primary cause of the flacca phenotype in tomato plants.</title>
        <authorList>
            <person name="Sagi M."/>
            <person name="Scazzocchio C."/>
            <person name="Fluhr R."/>
        </authorList>
    </citation>
    <scope>NUCLEOTIDE SEQUENCE [MRNA]</scope>
    <scope>FUNCTION</scope>
    <scope>TISSUE SPECIFICITY</scope>
</reference>
<keyword id="KW-0501">Molybdenum cofactor biosynthesis</keyword>
<keyword id="KW-0663">Pyridoxal phosphate</keyword>
<keyword id="KW-1185">Reference proteome</keyword>
<keyword id="KW-0808">Transferase</keyword>
<protein>
    <recommendedName>
        <fullName evidence="2">Molybdenum cofactor sulfurase</fullName>
        <shortName evidence="2">MCS</shortName>
        <shortName evidence="2">MOS</shortName>
        <shortName evidence="2">MoCo sulfurase</shortName>
        <ecNumber evidence="2">2.8.1.9</ecNumber>
    </recommendedName>
    <alternativeName>
        <fullName evidence="2">Molybdenum cofactor sulfurtransferase</fullName>
    </alternativeName>
</protein>
<comment type="function">
    <text evidence="2 3">Sulfurates the molybdenum cofactor. Sulfation of molybdenum is essential for xanthine dehydrogenase (XDH) and aldehyde oxidase (ADO) enzymes in which molybdenum cofactor is liganded by 1 oxygen and 1 sulfur atom in active form.</text>
</comment>
<comment type="catalytic activity">
    <reaction evidence="2">
        <text>Mo-molybdopterin + L-cysteine + AH2 = thio-Mo-molybdopterin + L-alanine + A + H2O</text>
        <dbReference type="Rhea" id="RHEA:42636"/>
        <dbReference type="ChEBI" id="CHEBI:13193"/>
        <dbReference type="ChEBI" id="CHEBI:15377"/>
        <dbReference type="ChEBI" id="CHEBI:17499"/>
        <dbReference type="ChEBI" id="CHEBI:35235"/>
        <dbReference type="ChEBI" id="CHEBI:57972"/>
        <dbReference type="ChEBI" id="CHEBI:71302"/>
        <dbReference type="ChEBI" id="CHEBI:82685"/>
        <dbReference type="EC" id="2.8.1.9"/>
    </reaction>
</comment>
<comment type="cofactor">
    <cofactor evidence="2">
        <name>pyridoxal 5'-phosphate</name>
        <dbReference type="ChEBI" id="CHEBI:597326"/>
    </cofactor>
</comment>
<comment type="pathway">
    <text evidence="1">Cofactor biosynthesis; molybdopterin biosynthesis.</text>
</comment>
<comment type="tissue specificity">
    <text evidence="3">Ubiquitously expressed.</text>
</comment>
<comment type="similarity">
    <text evidence="2">Belongs to the class-V pyridoxal-phosphate-dependent aminotransferase family. MOCOS subfamily.</text>
</comment>
<feature type="chain" id="PRO_0000249959" description="Molybdenum cofactor sulfurase">
    <location>
        <begin position="1"/>
        <end position="816"/>
    </location>
</feature>
<feature type="domain" description="MOSC" evidence="2">
    <location>
        <begin position="647"/>
        <end position="812"/>
    </location>
</feature>
<feature type="active site" evidence="2">
    <location>
        <position position="427"/>
    </location>
</feature>
<feature type="modified residue" description="N6-(pyridoxal phosphate)lysine" evidence="2">
    <location>
        <position position="273"/>
    </location>
</feature>
<dbReference type="EC" id="2.8.1.9" evidence="2"/>
<dbReference type="EMBL" id="AY074788">
    <property type="protein sequence ID" value="AAL71858.1"/>
    <property type="molecule type" value="mRNA"/>
</dbReference>
<dbReference type="RefSeq" id="NP_001234144.1">
    <property type="nucleotide sequence ID" value="NM_001247215.1"/>
</dbReference>
<dbReference type="SMR" id="Q8LGM7"/>
<dbReference type="FunCoup" id="Q8LGM7">
    <property type="interactions" value="1487"/>
</dbReference>
<dbReference type="STRING" id="4081.Q8LGM7"/>
<dbReference type="PaxDb" id="4081-Solyc07g066480.2.1"/>
<dbReference type="EnsemblPlants" id="Solyc07g066480.3.1">
    <property type="protein sequence ID" value="Solyc07g066480.3.1"/>
    <property type="gene ID" value="Solyc07g066480.3"/>
</dbReference>
<dbReference type="GeneID" id="543832"/>
<dbReference type="Gramene" id="Solyc07g066480.3.1">
    <property type="protein sequence ID" value="Solyc07g066480.3.1"/>
    <property type="gene ID" value="Solyc07g066480.3"/>
</dbReference>
<dbReference type="KEGG" id="sly:543832"/>
<dbReference type="eggNOG" id="KOG2142">
    <property type="taxonomic scope" value="Eukaryota"/>
</dbReference>
<dbReference type="HOGENOM" id="CLU_010913_0_1_1"/>
<dbReference type="InParanoid" id="Q8LGM7"/>
<dbReference type="OMA" id="PCTRCQM"/>
<dbReference type="OrthoDB" id="10264306at2759"/>
<dbReference type="PhylomeDB" id="Q8LGM7"/>
<dbReference type="UniPathway" id="UPA00344"/>
<dbReference type="Proteomes" id="UP000004994">
    <property type="component" value="Chromosome 7"/>
</dbReference>
<dbReference type="GO" id="GO:0016829">
    <property type="term" value="F:lyase activity"/>
    <property type="evidence" value="ECO:0007669"/>
    <property type="project" value="UniProtKB-UniRule"/>
</dbReference>
<dbReference type="GO" id="GO:0008265">
    <property type="term" value="F:molybdenum cofactor sulfurtransferase activity"/>
    <property type="evidence" value="ECO:0007669"/>
    <property type="project" value="UniProtKB-UniRule"/>
</dbReference>
<dbReference type="GO" id="GO:0030151">
    <property type="term" value="F:molybdenum ion binding"/>
    <property type="evidence" value="ECO:0007669"/>
    <property type="project" value="UniProtKB-UniRule"/>
</dbReference>
<dbReference type="GO" id="GO:0030170">
    <property type="term" value="F:pyridoxal phosphate binding"/>
    <property type="evidence" value="ECO:0007669"/>
    <property type="project" value="UniProtKB-UniRule"/>
</dbReference>
<dbReference type="GO" id="GO:0006777">
    <property type="term" value="P:Mo-molybdopterin cofactor biosynthetic process"/>
    <property type="evidence" value="ECO:0007669"/>
    <property type="project" value="UniProtKB-UniRule"/>
</dbReference>
<dbReference type="Gene3D" id="3.40.640.10">
    <property type="entry name" value="Type I PLP-dependent aspartate aminotransferase-like (Major domain)"/>
    <property type="match status" value="1"/>
</dbReference>
<dbReference type="HAMAP" id="MF_03050">
    <property type="entry name" value="MOCOS"/>
    <property type="match status" value="1"/>
</dbReference>
<dbReference type="InterPro" id="IPR000192">
    <property type="entry name" value="Aminotrans_V_dom"/>
</dbReference>
<dbReference type="InterPro" id="IPR005302">
    <property type="entry name" value="MoCF_Sase_C"/>
</dbReference>
<dbReference type="InterPro" id="IPR028886">
    <property type="entry name" value="MoCo_sulfurase"/>
</dbReference>
<dbReference type="InterPro" id="IPR005303">
    <property type="entry name" value="MOCOS_middle"/>
</dbReference>
<dbReference type="InterPro" id="IPR015424">
    <property type="entry name" value="PyrdxlP-dep_Trfase"/>
</dbReference>
<dbReference type="InterPro" id="IPR015421">
    <property type="entry name" value="PyrdxlP-dep_Trfase_major"/>
</dbReference>
<dbReference type="PANTHER" id="PTHR14237:SF89">
    <property type="entry name" value="MOLYBDENUM COFACTOR SULFURASE"/>
    <property type="match status" value="1"/>
</dbReference>
<dbReference type="PANTHER" id="PTHR14237">
    <property type="entry name" value="MOLYBDOPTERIN COFACTOR SULFURASE MOSC"/>
    <property type="match status" value="1"/>
</dbReference>
<dbReference type="Pfam" id="PF00266">
    <property type="entry name" value="Aminotran_5"/>
    <property type="match status" value="2"/>
</dbReference>
<dbReference type="Pfam" id="PF03473">
    <property type="entry name" value="MOSC"/>
    <property type="match status" value="1"/>
</dbReference>
<dbReference type="Pfam" id="PF03476">
    <property type="entry name" value="MOSC_N"/>
    <property type="match status" value="1"/>
</dbReference>
<dbReference type="SUPFAM" id="SSF141673">
    <property type="entry name" value="MOSC N-terminal domain-like"/>
    <property type="match status" value="1"/>
</dbReference>
<dbReference type="SUPFAM" id="SSF53383">
    <property type="entry name" value="PLP-dependent transferases"/>
    <property type="match status" value="1"/>
</dbReference>
<dbReference type="PROSITE" id="PS51340">
    <property type="entry name" value="MOSC"/>
    <property type="match status" value="1"/>
</dbReference>
<gene>
    <name type="primary">FLACCA</name>
</gene>
<name>MOCOS_SOLLC</name>
<accession>Q8LGM7</accession>
<sequence>MNIESEKEQFLKEFGSYYGYANSPKNIDEIRATEFKRLNDTVYLDHAGATLYSESQMEAVFKDLNSTLYGNPHSQSTCSLATEDIVGKARQQVLSFFNASPREYSCIFTSGATAALKLVGETFPWSSNSSFMYSMENHNSVLGIREYALSKGAAAFAVDIEDTHVGESESPQSNLKLTQHHIQRRNEGGVLKEGMTGNTYNLFAFPSECNFSGRKFDPNLIKIIKEGSERILESSQYSRGCWLVLIDAAKGCATNPPNLSMFKADFVVFSFYKLFGYPTGLGALIVRKDAAKLMKKTYFSGGTVTAAIADVDFFKRREGVEEFFEDGTISFLSITAIQHGFKIINMLTTSSIFRHTTSIAAYVRNKLLALKHENGEFVCTLYGLLSSEMGPTVSFNMKRPDGTWYGYREVEKLATLAGIQLRTGCFCNPGACAKYLGLSHLDLLSNIEAGHVCWDDRDILHGKPTGAVRVSFGYMSTFEDAMKFVNFVESNFVISSFNRCALQPRSISLPIEGIAEAAARHFLTSITVYPIKSCAGFSVDQWPLTSTGLLHDREWILKSTTGEILTQKKVPEMCYISTLIDLNLGKLFVESPRCKEKLQIELKSSSLVTERDEMDIQNHRYEVTSYNNEVDIWFSRAIDRPCTLLRNSDSQSHSCINKNGSPGMCRDVGARLNFVNEAQFLLISEESIKDLNSRLKSNGRRRNGGQAVQVGVMRFRPNLVASSGEPYAEDGWSNINIGGKYFMSLGGCNRCQMININPEAGEVQRFTEPLATLAGYRRAKGKIMFGILLRYENNTKTESDTWIRVGEEIIPNGDRH</sequence>